<protein>
    <recommendedName>
        <fullName>Uncharacterized protein C717R</fullName>
        <shortName>pC717R</shortName>
    </recommendedName>
</protein>
<organism>
    <name type="scientific">African swine fever virus (isolate Pig/Kenya/KEN-50/1950)</name>
    <name type="common">ASFV</name>
    <dbReference type="NCBI Taxonomy" id="561445"/>
    <lineage>
        <taxon>Viruses</taxon>
        <taxon>Varidnaviria</taxon>
        <taxon>Bamfordvirae</taxon>
        <taxon>Nucleocytoviricota</taxon>
        <taxon>Pokkesviricetes</taxon>
        <taxon>Asfuvirales</taxon>
        <taxon>Asfarviridae</taxon>
        <taxon>Asfivirus</taxon>
        <taxon>African swine fever virus</taxon>
    </lineage>
</organism>
<dbReference type="EMBL" id="AY261360">
    <property type="status" value="NOT_ANNOTATED_CDS"/>
    <property type="molecule type" value="Genomic_DNA"/>
</dbReference>
<dbReference type="Proteomes" id="UP000000861">
    <property type="component" value="Segment"/>
</dbReference>
<dbReference type="GO" id="GO:0044423">
    <property type="term" value="C:virion component"/>
    <property type="evidence" value="ECO:0007669"/>
    <property type="project" value="UniProtKB-KW"/>
</dbReference>
<keyword id="KW-0426">Late protein</keyword>
<keyword id="KW-0946">Virion</keyword>
<reference key="1">
    <citation type="submission" date="2003-03" db="EMBL/GenBank/DDBJ databases">
        <title>African swine fever virus genomes.</title>
        <authorList>
            <person name="Kutish G.F."/>
            <person name="Rock D.L."/>
        </authorList>
    </citation>
    <scope>NUCLEOTIDE SEQUENCE [LARGE SCALE GENOMIC DNA]</scope>
</reference>
<accession>P0CAJ5</accession>
<organismHost>
    <name type="scientific">Ornithodoros</name>
    <name type="common">relapsing fever ticks</name>
    <dbReference type="NCBI Taxonomy" id="6937"/>
</organismHost>
<organismHost>
    <name type="scientific">Phacochoerus aethiopicus</name>
    <name type="common">Warthog</name>
    <dbReference type="NCBI Taxonomy" id="85517"/>
</organismHost>
<organismHost>
    <name type="scientific">Phacochoerus africanus</name>
    <name type="common">Warthog</name>
    <dbReference type="NCBI Taxonomy" id="41426"/>
</organismHost>
<organismHost>
    <name type="scientific">Potamochoerus larvatus</name>
    <name type="common">Bushpig</name>
    <dbReference type="NCBI Taxonomy" id="273792"/>
</organismHost>
<organismHost>
    <name type="scientific">Sus scrofa</name>
    <name type="common">Pig</name>
    <dbReference type="NCBI Taxonomy" id="9823"/>
</organismHost>
<feature type="chain" id="PRO_0000373721" description="Uncharacterized protein C717R">
    <location>
        <begin position="1"/>
        <end position="718"/>
    </location>
</feature>
<proteinExistence type="inferred from homology"/>
<name>VF717_ASFK5</name>
<comment type="subcellular location">
    <subcellularLocation>
        <location evidence="1">Virion</location>
    </subcellularLocation>
</comment>
<comment type="induction">
    <text evidence="2">Expressed in the late phase of the viral replicative cycle.</text>
</comment>
<comment type="similarity">
    <text evidence="2">Belongs to the asfivirus C717R family.</text>
</comment>
<evidence type="ECO:0000250" key="1">
    <source>
        <dbReference type="UniProtKB" id="Q65156"/>
    </source>
</evidence>
<evidence type="ECO:0000305" key="2"/>
<sequence>MTKLAQWMFEQYVKDLNLNNRGSPSFRKWLTLQPSLLRYSGVMRANAFDILKYGYPMQQSGYTVATLEIHFKNIRSSFANIYWNRDSEEPEYVCCCATYQSHDGEYRYRFVWYQPFIEAYNAIETALDPLETIILNLIAARDLDFVVHIFPYNKGHEDYLASTQLILKIFIATLLMDILRIKDNTLDVHLNSDYIIVMERLWPHIKDAIEHFFEAHKDLLGYLIAFRNGGNFAGSLRPSCGQKIVPLTIREALQINDINLAVWREVFIMQECSDLVINGIAPCFPIFNTWTYLQGINQIFFENTSLQEKFKKDFIARELSKEIIKGQKNLNDKEFKKLSLHQIQYMESFLLMSDVAIMITTEYVGYTLQSLPGIISRSSYVSPIVKNILTDEDSFMSLLFDLCYGAYVLHKKENVIHADLHLNNMTYYHFNPTSFTDRNKPGKYTLKVNNPVIAFITGPKVETETYVFKHIDGFGCIIDFSRAIMGPNHAIKLERQYGLAFVNTFYRNQSEHILKVLRYYFPEMLTNRENEIQGVILSNFNFFFNSITAIDFYAIARNLRSMLSLDYLHTSEVKRNVEISQTFLDTCQFLEEKAVEFLFKNLHTVISGKPVEKTAGDVLLPIVFKKFLYPNIPKNILRSFTVIDVYNYNNIKRYSGKAIQTFPPWAQTKEILTHAEGRTFEDIFPRGELVFKKAYAENNYLDKILQRIREQLANENLR</sequence>
<gene>
    <name type="ordered locus">Ken-076</name>
</gene>